<accession>P36367</accession>
<evidence type="ECO:0000250" key="1">
    <source>
        <dbReference type="UniProtKB" id="Q8K4B7"/>
    </source>
</evidence>
<evidence type="ECO:0000250" key="2">
    <source>
        <dbReference type="UniProtKB" id="Q9HFE4"/>
    </source>
</evidence>
<evidence type="ECO:0000255" key="3"/>
<evidence type="ECO:0000305" key="4"/>
<reference key="1">
    <citation type="journal article" date="1994" name="J. Biol. Chem.">
        <title>Cloning and sequencing of flavin-containing monooxygenases FMO3 and FMO4 from rabbit and characterization of FMO3.</title>
        <authorList>
            <person name="Burnett V.L."/>
            <person name="Lawton M.P."/>
            <person name="Philpot R.M."/>
        </authorList>
    </citation>
    <scope>NUCLEOTIDE SEQUENCE [MRNA]</scope>
    <source>
        <strain>New Zealand white</strain>
        <tissue>Liver</tissue>
    </source>
</reference>
<gene>
    <name type="primary">FMO4</name>
</gene>
<name>FMO4_RABIT</name>
<protein>
    <recommendedName>
        <fullName>Dimethylaniline monooxygenase [N-oxide-forming] 4</fullName>
        <ecNumber>1.14.13.8</ecNumber>
    </recommendedName>
    <alternativeName>
        <fullName>Dimethylaniline oxidase 4</fullName>
    </alternativeName>
    <alternativeName>
        <fullName>FMO 1E1</fullName>
    </alternativeName>
    <alternativeName>
        <fullName>Hepatic flavin-containing monooxygenase 4</fullName>
        <shortName>FMO 4</shortName>
    </alternativeName>
</protein>
<feature type="chain" id="PRO_0000147662" description="Dimethylaniline monooxygenase [N-oxide-forming] 4">
    <location>
        <begin position="1"/>
        <end position="555"/>
    </location>
</feature>
<feature type="transmembrane region" description="Helical" evidence="3">
    <location>
        <begin position="515"/>
        <end position="532"/>
    </location>
</feature>
<feature type="binding site" evidence="2">
    <location>
        <begin position="9"/>
        <end position="13"/>
    </location>
    <ligand>
        <name>FAD</name>
        <dbReference type="ChEBI" id="CHEBI:57692"/>
    </ligand>
</feature>
<feature type="binding site" evidence="2">
    <location>
        <position position="32"/>
    </location>
    <ligand>
        <name>FAD</name>
        <dbReference type="ChEBI" id="CHEBI:57692"/>
    </ligand>
</feature>
<feature type="binding site" evidence="2">
    <location>
        <begin position="40"/>
        <end position="41"/>
    </location>
    <ligand>
        <name>FAD</name>
        <dbReference type="ChEBI" id="CHEBI:57692"/>
    </ligand>
</feature>
<feature type="binding site" evidence="2">
    <location>
        <begin position="60"/>
        <end position="61"/>
    </location>
    <ligand>
        <name>NADP(+)</name>
        <dbReference type="ChEBI" id="CHEBI:58349"/>
    </ligand>
</feature>
<feature type="binding site" evidence="2">
    <location>
        <begin position="195"/>
        <end position="198"/>
    </location>
    <ligand>
        <name>NADP(+)</name>
        <dbReference type="ChEBI" id="CHEBI:58349"/>
    </ligand>
</feature>
<sequence>MAKKVAVIGAGVSGLTSIKCCLDEDLEPTCFERSNDIGGLWKYTETSKDGMTRIYWSLVTNVCKEMSCYSDFPFQEDYPNFMSHSKFWNYLQEFAEHFDLLKYIQFKTTVCSVTKRPDFSKTGQWDVVTETEGKQHRAVFDAVMVCTGKFLNPRLPLESFPGILKFRGQILHCQEYKIPEGFRGQRVLVIGLGNSGGDVAVELSRVAAQVLLSTRTGTWVISRSSNGGYPFNMMITRRCLNVIEQVLPSCFLRWINERQMNKRFNHENYGLSITKGKNPKFIVNDELPTCILCGTVTVKTSVKEFTETSAIFEDGTVEENIDSVIFTTGYVFSFPFLEEPLRSLCMKKMFLYKHVFPSNLERASMAIIGLISLKGSILTGTELQARWATRVFKGLCKIPPPQQLMAEVTKKEELIKRGVIKDTSEEKLSYIPYMDDLAACIGTKPNIPLLFLKDPRLAWEVFFGPCTPYQYRLMGPGKWDGARNAILTQWDRTLKPLKTRTVSSDSSKSASLSHYLKVWGAPLLLASVLLICKSSHFLKSVRDKLQNRIFPYLVL</sequence>
<organism>
    <name type="scientific">Oryctolagus cuniculus</name>
    <name type="common">Rabbit</name>
    <dbReference type="NCBI Taxonomy" id="9986"/>
    <lineage>
        <taxon>Eukaryota</taxon>
        <taxon>Metazoa</taxon>
        <taxon>Chordata</taxon>
        <taxon>Craniata</taxon>
        <taxon>Vertebrata</taxon>
        <taxon>Euteleostomi</taxon>
        <taxon>Mammalia</taxon>
        <taxon>Eutheria</taxon>
        <taxon>Euarchontoglires</taxon>
        <taxon>Glires</taxon>
        <taxon>Lagomorpha</taxon>
        <taxon>Leporidae</taxon>
        <taxon>Oryctolagus</taxon>
    </lineage>
</organism>
<keyword id="KW-0256">Endoplasmic reticulum</keyword>
<keyword id="KW-0274">FAD</keyword>
<keyword id="KW-0285">Flavoprotein</keyword>
<keyword id="KW-0472">Membrane</keyword>
<keyword id="KW-0492">Microsome</keyword>
<keyword id="KW-0503">Monooxygenase</keyword>
<keyword id="KW-0521">NADP</keyword>
<keyword id="KW-0560">Oxidoreductase</keyword>
<keyword id="KW-1185">Reference proteome</keyword>
<keyword id="KW-0812">Transmembrane</keyword>
<keyword id="KW-1133">Transmembrane helix</keyword>
<dbReference type="EC" id="1.14.13.8"/>
<dbReference type="EMBL" id="L10392">
    <property type="protein sequence ID" value="AAA21177.1"/>
    <property type="molecule type" value="mRNA"/>
</dbReference>
<dbReference type="PIR" id="A54096">
    <property type="entry name" value="A54096"/>
</dbReference>
<dbReference type="RefSeq" id="NP_001076253.1">
    <property type="nucleotide sequence ID" value="NM_001082784.1"/>
</dbReference>
<dbReference type="SMR" id="P36367"/>
<dbReference type="FunCoup" id="P36367">
    <property type="interactions" value="5"/>
</dbReference>
<dbReference type="STRING" id="9986.ENSOCUP00000002427"/>
<dbReference type="PaxDb" id="9986-ENSOCUP00000002427"/>
<dbReference type="GeneID" id="100009582"/>
<dbReference type="KEGG" id="ocu:100009582"/>
<dbReference type="CTD" id="2329"/>
<dbReference type="eggNOG" id="KOG1399">
    <property type="taxonomic scope" value="Eukaryota"/>
</dbReference>
<dbReference type="InParanoid" id="P36367"/>
<dbReference type="OrthoDB" id="66881at2759"/>
<dbReference type="BRENDA" id="1.14.13.148">
    <property type="organism ID" value="1749"/>
</dbReference>
<dbReference type="Proteomes" id="UP000001811">
    <property type="component" value="Unplaced"/>
</dbReference>
<dbReference type="GO" id="GO:0005789">
    <property type="term" value="C:endoplasmic reticulum membrane"/>
    <property type="evidence" value="ECO:0007669"/>
    <property type="project" value="UniProtKB-SubCell"/>
</dbReference>
<dbReference type="GO" id="GO:0050660">
    <property type="term" value="F:flavin adenine dinucleotide binding"/>
    <property type="evidence" value="ECO:0007669"/>
    <property type="project" value="InterPro"/>
</dbReference>
<dbReference type="GO" id="GO:0004499">
    <property type="term" value="F:N,N-dimethylaniline monooxygenase activity"/>
    <property type="evidence" value="ECO:0007669"/>
    <property type="project" value="InterPro"/>
</dbReference>
<dbReference type="GO" id="GO:0050661">
    <property type="term" value="F:NADP binding"/>
    <property type="evidence" value="ECO:0007669"/>
    <property type="project" value="InterPro"/>
</dbReference>
<dbReference type="FunFam" id="3.50.50.60:FF:000023">
    <property type="entry name" value="Dimethylaniline monooxygenase [N-oxide-forming]"/>
    <property type="match status" value="1"/>
</dbReference>
<dbReference type="FunFam" id="3.50.50.60:FF:000042">
    <property type="entry name" value="Dimethylaniline monooxygenase [N-oxide-forming]"/>
    <property type="match status" value="1"/>
</dbReference>
<dbReference type="FunFam" id="3.50.50.60:FF:000073">
    <property type="entry name" value="Dimethylaniline monooxygenase [N-oxide-forming]"/>
    <property type="match status" value="1"/>
</dbReference>
<dbReference type="FunFam" id="3.50.50.60:FF:000183">
    <property type="entry name" value="Dimethylaniline monooxygenase [N-oxide-forming]"/>
    <property type="match status" value="1"/>
</dbReference>
<dbReference type="Gene3D" id="3.50.50.60">
    <property type="entry name" value="FAD/NAD(P)-binding domain"/>
    <property type="match status" value="3"/>
</dbReference>
<dbReference type="InterPro" id="IPR036188">
    <property type="entry name" value="FAD/NAD-bd_sf"/>
</dbReference>
<dbReference type="InterPro" id="IPR000960">
    <property type="entry name" value="Flavin_mOase"/>
</dbReference>
<dbReference type="InterPro" id="IPR020946">
    <property type="entry name" value="Flavin_mOase-like"/>
</dbReference>
<dbReference type="InterPro" id="IPR002256">
    <property type="entry name" value="Flavin_mOase_4"/>
</dbReference>
<dbReference type="InterPro" id="IPR050346">
    <property type="entry name" value="FMO-like"/>
</dbReference>
<dbReference type="PANTHER" id="PTHR23023">
    <property type="entry name" value="DIMETHYLANILINE MONOOXYGENASE"/>
    <property type="match status" value="1"/>
</dbReference>
<dbReference type="Pfam" id="PF00743">
    <property type="entry name" value="FMO-like"/>
    <property type="match status" value="1"/>
</dbReference>
<dbReference type="PIRSF" id="PIRSF000332">
    <property type="entry name" value="FMO"/>
    <property type="match status" value="1"/>
</dbReference>
<dbReference type="PRINTS" id="PR00370">
    <property type="entry name" value="FMOXYGENASE"/>
</dbReference>
<dbReference type="PRINTS" id="PR01124">
    <property type="entry name" value="FMOXYGENASE4"/>
</dbReference>
<dbReference type="SUPFAM" id="SSF51905">
    <property type="entry name" value="FAD/NAD(P)-binding domain"/>
    <property type="match status" value="2"/>
</dbReference>
<proteinExistence type="evidence at transcript level"/>
<comment type="function">
    <text>This protein is involved in the oxidative metabolism of a variety of xenobiotics such as drugs and pesticides.</text>
</comment>
<comment type="catalytic activity">
    <reaction>
        <text>N,N-dimethylaniline + NADPH + O2 + H(+) = N,N-dimethylaniline N-oxide + NADP(+) + H2O</text>
        <dbReference type="Rhea" id="RHEA:24468"/>
        <dbReference type="ChEBI" id="CHEBI:15377"/>
        <dbReference type="ChEBI" id="CHEBI:15378"/>
        <dbReference type="ChEBI" id="CHEBI:15379"/>
        <dbReference type="ChEBI" id="CHEBI:16269"/>
        <dbReference type="ChEBI" id="CHEBI:17735"/>
        <dbReference type="ChEBI" id="CHEBI:57783"/>
        <dbReference type="ChEBI" id="CHEBI:58349"/>
        <dbReference type="EC" id="1.14.13.8"/>
    </reaction>
</comment>
<comment type="cofactor">
    <cofactor>
        <name>FAD</name>
        <dbReference type="ChEBI" id="CHEBI:57692"/>
    </cofactor>
</comment>
<comment type="subcellular location">
    <subcellularLocation>
        <location evidence="1">Microsome membrane</location>
        <topology evidence="3">Single-pass membrane protein</topology>
    </subcellularLocation>
    <subcellularLocation>
        <location evidence="1">Endoplasmic reticulum membrane</location>
        <topology evidence="3">Single-pass membrane protein</topology>
    </subcellularLocation>
</comment>
<comment type="tissue specificity">
    <text>Kidney and liver.</text>
</comment>
<comment type="similarity">
    <text evidence="4">Belongs to the FMO family.</text>
</comment>